<reference key="1">
    <citation type="journal article" date="1997" name="Microbiology">
        <title>The Bacillus subtilis genome from gerBC (311 degrees) to licR (334 degrees).</title>
        <authorList>
            <person name="Presecan E."/>
            <person name="Moszer I."/>
            <person name="Boursier L."/>
            <person name="Cruz Ramos H."/>
            <person name="De La Fuente V."/>
            <person name="Hullo M.-F."/>
            <person name="Lelong C."/>
            <person name="Schleich S."/>
            <person name="Sekowska A."/>
            <person name="Song B.H."/>
            <person name="Villani G."/>
            <person name="Kunst F."/>
            <person name="Danchin A."/>
            <person name="Glaser P."/>
        </authorList>
    </citation>
    <scope>NUCLEOTIDE SEQUENCE [GENOMIC DNA]</scope>
    <source>
        <strain>168</strain>
    </source>
</reference>
<reference key="2">
    <citation type="journal article" date="1997" name="Nature">
        <title>The complete genome sequence of the Gram-positive bacterium Bacillus subtilis.</title>
        <authorList>
            <person name="Kunst F."/>
            <person name="Ogasawara N."/>
            <person name="Moszer I."/>
            <person name="Albertini A.M."/>
            <person name="Alloni G."/>
            <person name="Azevedo V."/>
            <person name="Bertero M.G."/>
            <person name="Bessieres P."/>
            <person name="Bolotin A."/>
            <person name="Borchert S."/>
            <person name="Borriss R."/>
            <person name="Boursier L."/>
            <person name="Brans A."/>
            <person name="Braun M."/>
            <person name="Brignell S.C."/>
            <person name="Bron S."/>
            <person name="Brouillet S."/>
            <person name="Bruschi C.V."/>
            <person name="Caldwell B."/>
            <person name="Capuano V."/>
            <person name="Carter N.M."/>
            <person name="Choi S.-K."/>
            <person name="Codani J.-J."/>
            <person name="Connerton I.F."/>
            <person name="Cummings N.J."/>
            <person name="Daniel R.A."/>
            <person name="Denizot F."/>
            <person name="Devine K.M."/>
            <person name="Duesterhoeft A."/>
            <person name="Ehrlich S.D."/>
            <person name="Emmerson P.T."/>
            <person name="Entian K.-D."/>
            <person name="Errington J."/>
            <person name="Fabret C."/>
            <person name="Ferrari E."/>
            <person name="Foulger D."/>
            <person name="Fritz C."/>
            <person name="Fujita M."/>
            <person name="Fujita Y."/>
            <person name="Fuma S."/>
            <person name="Galizzi A."/>
            <person name="Galleron N."/>
            <person name="Ghim S.-Y."/>
            <person name="Glaser P."/>
            <person name="Goffeau A."/>
            <person name="Golightly E.J."/>
            <person name="Grandi G."/>
            <person name="Guiseppi G."/>
            <person name="Guy B.J."/>
            <person name="Haga K."/>
            <person name="Haiech J."/>
            <person name="Harwood C.R."/>
            <person name="Henaut A."/>
            <person name="Hilbert H."/>
            <person name="Holsappel S."/>
            <person name="Hosono S."/>
            <person name="Hullo M.-F."/>
            <person name="Itaya M."/>
            <person name="Jones L.-M."/>
            <person name="Joris B."/>
            <person name="Karamata D."/>
            <person name="Kasahara Y."/>
            <person name="Klaerr-Blanchard M."/>
            <person name="Klein C."/>
            <person name="Kobayashi Y."/>
            <person name="Koetter P."/>
            <person name="Koningstein G."/>
            <person name="Krogh S."/>
            <person name="Kumano M."/>
            <person name="Kurita K."/>
            <person name="Lapidus A."/>
            <person name="Lardinois S."/>
            <person name="Lauber J."/>
            <person name="Lazarevic V."/>
            <person name="Lee S.-M."/>
            <person name="Levine A."/>
            <person name="Liu H."/>
            <person name="Masuda S."/>
            <person name="Mauel C."/>
            <person name="Medigue C."/>
            <person name="Medina N."/>
            <person name="Mellado R.P."/>
            <person name="Mizuno M."/>
            <person name="Moestl D."/>
            <person name="Nakai S."/>
            <person name="Noback M."/>
            <person name="Noone D."/>
            <person name="O'Reilly M."/>
            <person name="Ogawa K."/>
            <person name="Ogiwara A."/>
            <person name="Oudega B."/>
            <person name="Park S.-H."/>
            <person name="Parro V."/>
            <person name="Pohl T.M."/>
            <person name="Portetelle D."/>
            <person name="Porwollik S."/>
            <person name="Prescott A.M."/>
            <person name="Presecan E."/>
            <person name="Pujic P."/>
            <person name="Purnelle B."/>
            <person name="Rapoport G."/>
            <person name="Rey M."/>
            <person name="Reynolds S."/>
            <person name="Rieger M."/>
            <person name="Rivolta C."/>
            <person name="Rocha E."/>
            <person name="Roche B."/>
            <person name="Rose M."/>
            <person name="Sadaie Y."/>
            <person name="Sato T."/>
            <person name="Scanlan E."/>
            <person name="Schleich S."/>
            <person name="Schroeter R."/>
            <person name="Scoffone F."/>
            <person name="Sekiguchi J."/>
            <person name="Sekowska A."/>
            <person name="Seror S.J."/>
            <person name="Serror P."/>
            <person name="Shin B.-S."/>
            <person name="Soldo B."/>
            <person name="Sorokin A."/>
            <person name="Tacconi E."/>
            <person name="Takagi T."/>
            <person name="Takahashi H."/>
            <person name="Takemaru K."/>
            <person name="Takeuchi M."/>
            <person name="Tamakoshi A."/>
            <person name="Tanaka T."/>
            <person name="Terpstra P."/>
            <person name="Tognoni A."/>
            <person name="Tosato V."/>
            <person name="Uchiyama S."/>
            <person name="Vandenbol M."/>
            <person name="Vannier F."/>
            <person name="Vassarotti A."/>
            <person name="Viari A."/>
            <person name="Wambutt R."/>
            <person name="Wedler E."/>
            <person name="Wedler H."/>
            <person name="Weitzenegger T."/>
            <person name="Winters P."/>
            <person name="Wipat A."/>
            <person name="Yamamoto H."/>
            <person name="Yamane K."/>
            <person name="Yasumoto K."/>
            <person name="Yata K."/>
            <person name="Yoshida K."/>
            <person name="Yoshikawa H.-F."/>
            <person name="Zumstein E."/>
            <person name="Yoshikawa H."/>
            <person name="Danchin A."/>
        </authorList>
    </citation>
    <scope>NUCLEOTIDE SEQUENCE [LARGE SCALE GENOMIC DNA]</scope>
    <source>
        <strain>168</strain>
    </source>
</reference>
<organism>
    <name type="scientific">Bacillus subtilis (strain 168)</name>
    <dbReference type="NCBI Taxonomy" id="224308"/>
    <lineage>
        <taxon>Bacteria</taxon>
        <taxon>Bacillati</taxon>
        <taxon>Bacillota</taxon>
        <taxon>Bacilli</taxon>
        <taxon>Bacillales</taxon>
        <taxon>Bacillaceae</taxon>
        <taxon>Bacillus</taxon>
    </lineage>
</organism>
<accession>P94574</accession>
<accession>Q795A3</accession>
<name>YWOD_BACSU</name>
<dbReference type="EMBL" id="Z82987">
    <property type="protein sequence ID" value="CAB05377.1"/>
    <property type="molecule type" value="Genomic_DNA"/>
</dbReference>
<dbReference type="EMBL" id="AL009126">
    <property type="protein sequence ID" value="CAB15665.1"/>
    <property type="molecule type" value="Genomic_DNA"/>
</dbReference>
<dbReference type="PIR" id="G70064">
    <property type="entry name" value="G70064"/>
</dbReference>
<dbReference type="RefSeq" id="NP_391529.1">
    <property type="nucleotide sequence ID" value="NC_000964.3"/>
</dbReference>
<dbReference type="RefSeq" id="WP_003243939.1">
    <property type="nucleotide sequence ID" value="NZ_OZ025638.1"/>
</dbReference>
<dbReference type="SMR" id="P94574"/>
<dbReference type="FunCoup" id="P94574">
    <property type="interactions" value="31"/>
</dbReference>
<dbReference type="STRING" id="224308.BSU36480"/>
<dbReference type="TCDB" id="2.A.1.3.57">
    <property type="family name" value="the major facilitator superfamily (mfs)"/>
</dbReference>
<dbReference type="PaxDb" id="224308-BSU36480"/>
<dbReference type="EnsemblBacteria" id="CAB15665">
    <property type="protein sequence ID" value="CAB15665"/>
    <property type="gene ID" value="BSU_36480"/>
</dbReference>
<dbReference type="GeneID" id="938533"/>
<dbReference type="KEGG" id="bsu:BSU36480"/>
<dbReference type="PATRIC" id="fig|224308.179.peg.3947"/>
<dbReference type="eggNOG" id="COG0477">
    <property type="taxonomic scope" value="Bacteria"/>
</dbReference>
<dbReference type="InParanoid" id="P94574"/>
<dbReference type="OrthoDB" id="102502at2"/>
<dbReference type="PhylomeDB" id="P94574"/>
<dbReference type="BioCyc" id="BSUB:BSU36480-MONOMER"/>
<dbReference type="Proteomes" id="UP000001570">
    <property type="component" value="Chromosome"/>
</dbReference>
<dbReference type="GO" id="GO:0005886">
    <property type="term" value="C:plasma membrane"/>
    <property type="evidence" value="ECO:0000318"/>
    <property type="project" value="GO_Central"/>
</dbReference>
<dbReference type="GO" id="GO:0022857">
    <property type="term" value="F:transmembrane transporter activity"/>
    <property type="evidence" value="ECO:0000318"/>
    <property type="project" value="GO_Central"/>
</dbReference>
<dbReference type="GO" id="GO:0055085">
    <property type="term" value="P:transmembrane transport"/>
    <property type="evidence" value="ECO:0000318"/>
    <property type="project" value="GO_Central"/>
</dbReference>
<dbReference type="CDD" id="cd17321">
    <property type="entry name" value="MFS_MMR_MDR_like"/>
    <property type="match status" value="1"/>
</dbReference>
<dbReference type="Gene3D" id="1.20.1250.20">
    <property type="entry name" value="MFS general substrate transporter like domains"/>
    <property type="match status" value="1"/>
</dbReference>
<dbReference type="Gene3D" id="1.20.1720.10">
    <property type="entry name" value="Multidrug resistance protein D"/>
    <property type="match status" value="1"/>
</dbReference>
<dbReference type="InterPro" id="IPR011701">
    <property type="entry name" value="MFS"/>
</dbReference>
<dbReference type="InterPro" id="IPR020846">
    <property type="entry name" value="MFS_dom"/>
</dbReference>
<dbReference type="InterPro" id="IPR036259">
    <property type="entry name" value="MFS_trans_sf"/>
</dbReference>
<dbReference type="PANTHER" id="PTHR42718">
    <property type="entry name" value="MAJOR FACILITATOR SUPERFAMILY MULTIDRUG TRANSPORTER MFSC"/>
    <property type="match status" value="1"/>
</dbReference>
<dbReference type="PANTHER" id="PTHR42718:SF9">
    <property type="entry name" value="MAJOR FACILITATOR SUPERFAMILY MULTIDRUG TRANSPORTER MFSC"/>
    <property type="match status" value="1"/>
</dbReference>
<dbReference type="Pfam" id="PF07690">
    <property type="entry name" value="MFS_1"/>
    <property type="match status" value="1"/>
</dbReference>
<dbReference type="SUPFAM" id="SSF103473">
    <property type="entry name" value="MFS general substrate transporter"/>
    <property type="match status" value="1"/>
</dbReference>
<dbReference type="PROSITE" id="PS50850">
    <property type="entry name" value="MFS"/>
    <property type="match status" value="1"/>
</dbReference>
<feature type="chain" id="PRO_0000359522" description="Uncharacterized MFS-type transporter YwoD">
    <location>
        <begin position="1"/>
        <end position="452"/>
    </location>
</feature>
<feature type="transmembrane region" description="Helical" evidence="1">
    <location>
        <begin position="8"/>
        <end position="28"/>
    </location>
</feature>
<feature type="transmembrane region" description="Helical" evidence="1">
    <location>
        <begin position="39"/>
        <end position="59"/>
    </location>
</feature>
<feature type="transmembrane region" description="Helical" evidence="1">
    <location>
        <begin position="77"/>
        <end position="97"/>
    </location>
</feature>
<feature type="transmembrane region" description="Helical" evidence="1">
    <location>
        <begin position="100"/>
        <end position="122"/>
    </location>
</feature>
<feature type="transmembrane region" description="Helical" evidence="1">
    <location>
        <begin position="134"/>
        <end position="156"/>
    </location>
</feature>
<feature type="transmembrane region" description="Helical" evidence="1">
    <location>
        <begin position="161"/>
        <end position="183"/>
    </location>
</feature>
<feature type="transmembrane region" description="Helical" evidence="1">
    <location>
        <begin position="203"/>
        <end position="222"/>
    </location>
</feature>
<feature type="transmembrane region" description="Helical" evidence="1">
    <location>
        <begin position="226"/>
        <end position="243"/>
    </location>
</feature>
<feature type="transmembrane region" description="Helical" evidence="1">
    <location>
        <begin position="266"/>
        <end position="286"/>
    </location>
</feature>
<feature type="transmembrane region" description="Helical" evidence="1">
    <location>
        <begin position="302"/>
        <end position="322"/>
    </location>
</feature>
<feature type="transmembrane region" description="Helical" evidence="1">
    <location>
        <begin position="330"/>
        <end position="350"/>
    </location>
</feature>
<feature type="transmembrane region" description="Helical" evidence="1">
    <location>
        <begin position="359"/>
        <end position="379"/>
    </location>
</feature>
<feature type="transmembrane region" description="Helical" evidence="1">
    <location>
        <begin position="393"/>
        <end position="415"/>
    </location>
</feature>
<feature type="transmembrane region" description="Helical" evidence="1">
    <location>
        <begin position="425"/>
        <end position="447"/>
    </location>
</feature>
<comment type="subcellular location">
    <subcellularLocation>
        <location evidence="2">Cell membrane</location>
        <topology evidence="2">Multi-pass membrane protein</topology>
    </subcellularLocation>
</comment>
<comment type="similarity">
    <text evidence="2">Belongs to the major facilitator superfamily.</text>
</comment>
<keyword id="KW-1003">Cell membrane</keyword>
<keyword id="KW-0472">Membrane</keyword>
<keyword id="KW-1185">Reference proteome</keyword>
<keyword id="KW-0812">Transmembrane</keyword>
<keyword id="KW-1133">Transmembrane helix</keyword>
<keyword id="KW-0813">Transport</keyword>
<gene>
    <name type="primary">ywoD</name>
    <name type="ordered locus">BSU36480</name>
</gene>
<proteinExistence type="inferred from homology"/>
<evidence type="ECO:0000255" key="1"/>
<evidence type="ECO:0000305" key="2"/>
<protein>
    <recommendedName>
        <fullName>Uncharacterized MFS-type transporter YwoD</fullName>
    </recommendedName>
</protein>
<sequence length="452" mass="48654">MLSKKSRAVFLTAVASGTMLNPLNSSMISLALHSIQHEFHLSFTTVSWLISSFYLASAVAQPVTGKLGDLIGRKRLFLFGLILVAVSAIGAPFAPTFMTLLVMRLFQSVGSSAIYPSGVGLIRNHIHERQASALAVLSIFASAMTALGPTAGGFLIVWGGWPAIFIVNLPFIILSFLLGLYMFPKDQKKGAGIKTIIRQLDILGIVLFAGGIIFLLSFLLSFSTSPHAVEGVLGLLLLCAFVWRELKTDKPFIDVRLFKTQRNLSAVYVQFILLNVFFYCLFFGLPSYFQDEMHLSVQTSGLFMLFMSGMSIVVSPLTGKWIDRSGVVKPIFAGALLMTAGAVLLTIFFINVQTIGKGLILSLLGIGYGLGNVALQAAMLETSPSNMVGTTSGLFQTCRYLGSILSSVILGILFGKEITAAHFDMMGIIMIIAGGASLLMAVRFAALMKTAS</sequence>